<gene>
    <name type="primary">Mecr</name>
    <name type="synonym">Nrbf1</name>
</gene>
<name>MECR_MOUSE</name>
<feature type="transit peptide" description="Mitochondrion" evidence="4">
    <location>
        <begin position="1"/>
        <end position="53"/>
    </location>
</feature>
<feature type="chain" id="PRO_0000000889" description="Enoyl-[acyl-carrier-protein] reductase, mitochondrial">
    <location>
        <begin position="54"/>
        <end position="373"/>
    </location>
</feature>
<feature type="active site" description="Proton donor" evidence="1">
    <location>
        <position position="94"/>
    </location>
</feature>
<feature type="binding site" evidence="1">
    <location>
        <position position="167"/>
    </location>
    <ligand>
        <name>NADP(+)</name>
        <dbReference type="ChEBI" id="CHEBI:58349"/>
    </ligand>
</feature>
<feature type="binding site" evidence="1">
    <location>
        <begin position="193"/>
        <end position="196"/>
    </location>
    <ligand>
        <name>NADP(+)</name>
        <dbReference type="ChEBI" id="CHEBI:58349"/>
    </ligand>
</feature>
<feature type="binding site" evidence="1">
    <location>
        <begin position="216"/>
        <end position="218"/>
    </location>
    <ligand>
        <name>NADP(+)</name>
        <dbReference type="ChEBI" id="CHEBI:58349"/>
    </ligand>
</feature>
<feature type="binding site" evidence="1">
    <location>
        <begin position="285"/>
        <end position="288"/>
    </location>
    <ligand>
        <name>NADP(+)</name>
        <dbReference type="ChEBI" id="CHEBI:58349"/>
    </ligand>
</feature>
<feature type="binding site" evidence="1">
    <location>
        <begin position="310"/>
        <end position="312"/>
    </location>
    <ligand>
        <name>NADP(+)</name>
        <dbReference type="ChEBI" id="CHEBI:58349"/>
    </ligand>
</feature>
<feature type="binding site" evidence="1">
    <location>
        <position position="368"/>
    </location>
    <ligand>
        <name>NADP(+)</name>
        <dbReference type="ChEBI" id="CHEBI:58349"/>
    </ligand>
</feature>
<feature type="modified residue" description="N6-acetyllysine; alternate" evidence="8">
    <location>
        <position position="61"/>
    </location>
</feature>
<feature type="modified residue" description="N6-succinyllysine; alternate" evidence="9">
    <location>
        <position position="61"/>
    </location>
</feature>
<feature type="modified residue" description="N6-acetyllysine; alternate" evidence="8">
    <location>
        <position position="252"/>
    </location>
</feature>
<feature type="modified residue" description="N6-succinyllysine; alternate" evidence="9">
    <location>
        <position position="252"/>
    </location>
</feature>
<feature type="modified residue" description="N6-acetyllysine; alternate" evidence="9">
    <location>
        <position position="267"/>
    </location>
</feature>
<feature type="modified residue" description="N6-succinyllysine; alternate" evidence="9">
    <location>
        <position position="267"/>
    </location>
</feature>
<feature type="modified residue" description="N6-succinyllysine" evidence="9">
    <location>
        <position position="316"/>
    </location>
</feature>
<feature type="sequence conflict" description="In Ref. 1; BAB22169." evidence="7" ref="1">
    <original>E</original>
    <variation>K</variation>
    <location>
        <position position="69"/>
    </location>
</feature>
<reference key="1">
    <citation type="journal article" date="2005" name="Science">
        <title>The transcriptional landscape of the mammalian genome.</title>
        <authorList>
            <person name="Carninci P."/>
            <person name="Kasukawa T."/>
            <person name="Katayama S."/>
            <person name="Gough J."/>
            <person name="Frith M.C."/>
            <person name="Maeda N."/>
            <person name="Oyama R."/>
            <person name="Ravasi T."/>
            <person name="Lenhard B."/>
            <person name="Wells C."/>
            <person name="Kodzius R."/>
            <person name="Shimokawa K."/>
            <person name="Bajic V.B."/>
            <person name="Brenner S.E."/>
            <person name="Batalov S."/>
            <person name="Forrest A.R."/>
            <person name="Zavolan M."/>
            <person name="Davis M.J."/>
            <person name="Wilming L.G."/>
            <person name="Aidinis V."/>
            <person name="Allen J.E."/>
            <person name="Ambesi-Impiombato A."/>
            <person name="Apweiler R."/>
            <person name="Aturaliya R.N."/>
            <person name="Bailey T.L."/>
            <person name="Bansal M."/>
            <person name="Baxter L."/>
            <person name="Beisel K.W."/>
            <person name="Bersano T."/>
            <person name="Bono H."/>
            <person name="Chalk A.M."/>
            <person name="Chiu K.P."/>
            <person name="Choudhary V."/>
            <person name="Christoffels A."/>
            <person name="Clutterbuck D.R."/>
            <person name="Crowe M.L."/>
            <person name="Dalla E."/>
            <person name="Dalrymple B.P."/>
            <person name="de Bono B."/>
            <person name="Della Gatta G."/>
            <person name="di Bernardo D."/>
            <person name="Down T."/>
            <person name="Engstrom P."/>
            <person name="Fagiolini M."/>
            <person name="Faulkner G."/>
            <person name="Fletcher C.F."/>
            <person name="Fukushima T."/>
            <person name="Furuno M."/>
            <person name="Futaki S."/>
            <person name="Gariboldi M."/>
            <person name="Georgii-Hemming P."/>
            <person name="Gingeras T.R."/>
            <person name="Gojobori T."/>
            <person name="Green R.E."/>
            <person name="Gustincich S."/>
            <person name="Harbers M."/>
            <person name="Hayashi Y."/>
            <person name="Hensch T.K."/>
            <person name="Hirokawa N."/>
            <person name="Hill D."/>
            <person name="Huminiecki L."/>
            <person name="Iacono M."/>
            <person name="Ikeo K."/>
            <person name="Iwama A."/>
            <person name="Ishikawa T."/>
            <person name="Jakt M."/>
            <person name="Kanapin A."/>
            <person name="Katoh M."/>
            <person name="Kawasawa Y."/>
            <person name="Kelso J."/>
            <person name="Kitamura H."/>
            <person name="Kitano H."/>
            <person name="Kollias G."/>
            <person name="Krishnan S.P."/>
            <person name="Kruger A."/>
            <person name="Kummerfeld S.K."/>
            <person name="Kurochkin I.V."/>
            <person name="Lareau L.F."/>
            <person name="Lazarevic D."/>
            <person name="Lipovich L."/>
            <person name="Liu J."/>
            <person name="Liuni S."/>
            <person name="McWilliam S."/>
            <person name="Madan Babu M."/>
            <person name="Madera M."/>
            <person name="Marchionni L."/>
            <person name="Matsuda H."/>
            <person name="Matsuzawa S."/>
            <person name="Miki H."/>
            <person name="Mignone F."/>
            <person name="Miyake S."/>
            <person name="Morris K."/>
            <person name="Mottagui-Tabar S."/>
            <person name="Mulder N."/>
            <person name="Nakano N."/>
            <person name="Nakauchi H."/>
            <person name="Ng P."/>
            <person name="Nilsson R."/>
            <person name="Nishiguchi S."/>
            <person name="Nishikawa S."/>
            <person name="Nori F."/>
            <person name="Ohara O."/>
            <person name="Okazaki Y."/>
            <person name="Orlando V."/>
            <person name="Pang K.C."/>
            <person name="Pavan W.J."/>
            <person name="Pavesi G."/>
            <person name="Pesole G."/>
            <person name="Petrovsky N."/>
            <person name="Piazza S."/>
            <person name="Reed J."/>
            <person name="Reid J.F."/>
            <person name="Ring B.Z."/>
            <person name="Ringwald M."/>
            <person name="Rost B."/>
            <person name="Ruan Y."/>
            <person name="Salzberg S.L."/>
            <person name="Sandelin A."/>
            <person name="Schneider C."/>
            <person name="Schoenbach C."/>
            <person name="Sekiguchi K."/>
            <person name="Semple C.A."/>
            <person name="Seno S."/>
            <person name="Sessa L."/>
            <person name="Sheng Y."/>
            <person name="Shibata Y."/>
            <person name="Shimada H."/>
            <person name="Shimada K."/>
            <person name="Silva D."/>
            <person name="Sinclair B."/>
            <person name="Sperling S."/>
            <person name="Stupka E."/>
            <person name="Sugiura K."/>
            <person name="Sultana R."/>
            <person name="Takenaka Y."/>
            <person name="Taki K."/>
            <person name="Tammoja K."/>
            <person name="Tan S.L."/>
            <person name="Tang S."/>
            <person name="Taylor M.S."/>
            <person name="Tegner J."/>
            <person name="Teichmann S.A."/>
            <person name="Ueda H.R."/>
            <person name="van Nimwegen E."/>
            <person name="Verardo R."/>
            <person name="Wei C.L."/>
            <person name="Yagi K."/>
            <person name="Yamanishi H."/>
            <person name="Zabarovsky E."/>
            <person name="Zhu S."/>
            <person name="Zimmer A."/>
            <person name="Hide W."/>
            <person name="Bult C."/>
            <person name="Grimmond S.M."/>
            <person name="Teasdale R.D."/>
            <person name="Liu E.T."/>
            <person name="Brusic V."/>
            <person name="Quackenbush J."/>
            <person name="Wahlestedt C."/>
            <person name="Mattick J.S."/>
            <person name="Hume D.A."/>
            <person name="Kai C."/>
            <person name="Sasaki D."/>
            <person name="Tomaru Y."/>
            <person name="Fukuda S."/>
            <person name="Kanamori-Katayama M."/>
            <person name="Suzuki M."/>
            <person name="Aoki J."/>
            <person name="Arakawa T."/>
            <person name="Iida J."/>
            <person name="Imamura K."/>
            <person name="Itoh M."/>
            <person name="Kato T."/>
            <person name="Kawaji H."/>
            <person name="Kawagashira N."/>
            <person name="Kawashima T."/>
            <person name="Kojima M."/>
            <person name="Kondo S."/>
            <person name="Konno H."/>
            <person name="Nakano K."/>
            <person name="Ninomiya N."/>
            <person name="Nishio T."/>
            <person name="Okada M."/>
            <person name="Plessy C."/>
            <person name="Shibata K."/>
            <person name="Shiraki T."/>
            <person name="Suzuki S."/>
            <person name="Tagami M."/>
            <person name="Waki K."/>
            <person name="Watahiki A."/>
            <person name="Okamura-Oho Y."/>
            <person name="Suzuki H."/>
            <person name="Kawai J."/>
            <person name="Hayashizaki Y."/>
        </authorList>
    </citation>
    <scope>NUCLEOTIDE SEQUENCE [LARGE SCALE MRNA]</scope>
    <source>
        <strain>C57BL/6J</strain>
        <tissue>Kidney</tissue>
    </source>
</reference>
<reference key="2">
    <citation type="journal article" date="2004" name="Genome Res.">
        <title>The status, quality, and expansion of the NIH full-length cDNA project: the Mammalian Gene Collection (MGC).</title>
        <authorList>
            <consortium name="The MGC Project Team"/>
        </authorList>
    </citation>
    <scope>NUCLEOTIDE SEQUENCE [LARGE SCALE MRNA]</scope>
    <source>
        <strain>FVB/N</strain>
        <tissue>Mammary tumor</tissue>
    </source>
</reference>
<reference key="3">
    <citation type="journal article" date="2010" name="Cell">
        <title>A tissue-specific atlas of mouse protein phosphorylation and expression.</title>
        <authorList>
            <person name="Huttlin E.L."/>
            <person name="Jedrychowski M.P."/>
            <person name="Elias J.E."/>
            <person name="Goswami T."/>
            <person name="Rad R."/>
            <person name="Beausoleil S.A."/>
            <person name="Villen J."/>
            <person name="Haas W."/>
            <person name="Sowa M.E."/>
            <person name="Gygi S.P."/>
        </authorList>
    </citation>
    <scope>IDENTIFICATION BY MASS SPECTROMETRY [LARGE SCALE ANALYSIS]</scope>
    <source>
        <tissue>Brain</tissue>
        <tissue>Brown adipose tissue</tissue>
        <tissue>Heart</tissue>
        <tissue>Kidney</tissue>
        <tissue>Liver</tissue>
        <tissue>Lung</tissue>
        <tissue>Pancreas</tissue>
        <tissue>Spleen</tissue>
        <tissue>Testis</tissue>
    </source>
</reference>
<reference key="4">
    <citation type="journal article" date="2013" name="Mol. Cell">
        <title>SIRT5-mediated lysine desuccinylation impacts diverse metabolic pathways.</title>
        <authorList>
            <person name="Park J."/>
            <person name="Chen Y."/>
            <person name="Tishkoff D.X."/>
            <person name="Peng C."/>
            <person name="Tan M."/>
            <person name="Dai L."/>
            <person name="Xie Z."/>
            <person name="Zhang Y."/>
            <person name="Zwaans B.M."/>
            <person name="Skinner M.E."/>
            <person name="Lombard D.B."/>
            <person name="Zhao Y."/>
        </authorList>
    </citation>
    <scope>ACETYLATION [LARGE SCALE ANALYSIS] AT LYS-267</scope>
    <scope>SUCCINYLATION [LARGE SCALE ANALYSIS] AT LYS-61; LYS-252; LYS-267 AND LYS-316</scope>
    <scope>IDENTIFICATION BY MASS SPECTROMETRY [LARGE SCALE ANALYSIS]</scope>
    <source>
        <tissue>Embryonic fibroblast</tissue>
        <tissue>Liver</tissue>
    </source>
</reference>
<reference key="5">
    <citation type="journal article" date="2013" name="Proc. Natl. Acad. Sci. U.S.A.">
        <title>Label-free quantitative proteomics of the lysine acetylome in mitochondria identifies substrates of SIRT3 in metabolic pathways.</title>
        <authorList>
            <person name="Rardin M.J."/>
            <person name="Newman J.C."/>
            <person name="Held J.M."/>
            <person name="Cusack M.P."/>
            <person name="Sorensen D.J."/>
            <person name="Li B."/>
            <person name="Schilling B."/>
            <person name="Mooney S.D."/>
            <person name="Kahn C.R."/>
            <person name="Verdin E."/>
            <person name="Gibson B.W."/>
        </authorList>
    </citation>
    <scope>ACETYLATION [LARGE SCALE ANALYSIS] AT LYS-61 AND LYS-252</scope>
    <scope>IDENTIFICATION BY MASS SPECTROMETRY [LARGE SCALE ANALYSIS]</scope>
    <source>
        <tissue>Liver</tissue>
    </source>
</reference>
<reference key="6">
    <citation type="journal article" date="2017" name="Hum. Mol. Genet.">
        <title>Genetic modifications of Mecr reveal a role for mitochondrial 2-enoyl-CoA/ACP reductase in placental development in mice.</title>
        <authorList>
            <person name="Nair R.R."/>
            <person name="Keraetaer J.M."/>
            <person name="Autio K.J."/>
            <person name="Masud A.J."/>
            <person name="Finnilae M.A.J."/>
            <person name="Autio-Harmainen H.I."/>
            <person name="Miinalainen I.J."/>
            <person name="Nieminen P.A."/>
            <person name="Hiltunen J.K."/>
            <person name="Kastaniotis A.J."/>
        </authorList>
    </citation>
    <scope>DISRUPTION PHENOTYPE</scope>
</reference>
<reference key="7">
    <citation type="journal article" date="2018" name="J. Neurosci.">
        <title>Impaired Mitochondrial Fatty Acid Synthesis Leads to Neurodegeneration in Mice.</title>
        <authorList>
            <person name="Nair R.R."/>
            <person name="Koivisto H."/>
            <person name="Jokivarsi K."/>
            <person name="Miinalainen I.J."/>
            <person name="Autio K.J."/>
            <person name="Manninen A."/>
            <person name="Poutiainen P."/>
            <person name="Tanila H."/>
            <person name="Hiltunen J.K."/>
            <person name="Kastaniotis A.J."/>
        </authorList>
    </citation>
    <scope>FUNCTION</scope>
    <scope>TISSUE SPECIFICITY</scope>
</reference>
<keyword id="KW-0007">Acetylation</keyword>
<keyword id="KW-0275">Fatty acid biosynthesis</keyword>
<keyword id="KW-0276">Fatty acid metabolism</keyword>
<keyword id="KW-0444">Lipid biosynthesis</keyword>
<keyword id="KW-0443">Lipid metabolism</keyword>
<keyword id="KW-0496">Mitochondrion</keyword>
<keyword id="KW-0521">NADP</keyword>
<keyword id="KW-0560">Oxidoreductase</keyword>
<keyword id="KW-1185">Reference proteome</keyword>
<keyword id="KW-0809">Transit peptide</keyword>
<accession>Q9DCS3</accession>
<accession>Q99L39</accession>
<comment type="function">
    <text evidence="2 3 6">Catalyzes the NADPH-dependent reduction of trans-2-enoyl thioesters in mitochondrial fatty acid synthesis (fatty acid synthesis type II). Fatty acid chain elongation in mitochondria uses acyl carrier protein (ACP) as an acyl group carrier, but the enzyme accepts both ACP and CoA thioesters as substrates in vitro. Displays a preference for medium-chain over short- and long-chain substrates (By similarity). May provide the octanoyl chain used for lipoic acid biosynthesis, regulating protein lipoylation and mitochondrial respiratory activity particularly in Purkinje cells (PubMed:30266742). Involved in iron homeostasis; affecting Fe-S cluster assembly and ceramide metabolism (By similarity). Required for proper morphology and bioenergetic functions of mitochondria (By similarity). Required for maintenance of neurons (By similarity).</text>
</comment>
<comment type="catalytic activity">
    <reaction evidence="2">
        <text>a 2,3-saturated acyl-[ACP] + NADP(+) = a (2E)-enoyl-[ACP] + NADPH + H(+)</text>
        <dbReference type="Rhea" id="RHEA:22564"/>
        <dbReference type="Rhea" id="RHEA-COMP:9925"/>
        <dbReference type="Rhea" id="RHEA-COMP:9926"/>
        <dbReference type="ChEBI" id="CHEBI:15378"/>
        <dbReference type="ChEBI" id="CHEBI:57783"/>
        <dbReference type="ChEBI" id="CHEBI:58349"/>
        <dbReference type="ChEBI" id="CHEBI:78784"/>
        <dbReference type="ChEBI" id="CHEBI:78785"/>
        <dbReference type="EC" id="1.3.1.104"/>
    </reaction>
    <physiologicalReaction direction="right-to-left" evidence="2">
        <dbReference type="Rhea" id="RHEA:22566"/>
    </physiologicalReaction>
</comment>
<comment type="catalytic activity">
    <reaction evidence="2">
        <text>(2E)-butenoyl-[ACP] + NADPH + H(+) = butanoyl-[ACP] + NADP(+)</text>
        <dbReference type="Rhea" id="RHEA:41812"/>
        <dbReference type="Rhea" id="RHEA-COMP:9627"/>
        <dbReference type="Rhea" id="RHEA-COMP:9628"/>
        <dbReference type="ChEBI" id="CHEBI:15378"/>
        <dbReference type="ChEBI" id="CHEBI:57783"/>
        <dbReference type="ChEBI" id="CHEBI:58349"/>
        <dbReference type="ChEBI" id="CHEBI:78453"/>
        <dbReference type="ChEBI" id="CHEBI:78454"/>
    </reaction>
    <physiologicalReaction direction="left-to-right" evidence="2">
        <dbReference type="Rhea" id="RHEA:41813"/>
    </physiologicalReaction>
</comment>
<comment type="catalytic activity">
    <reaction evidence="2">
        <text>(2E)-hexenoyl-[ACP] + NADPH + H(+) = hexanoyl-[ACP] + NADP(+)</text>
        <dbReference type="Rhea" id="RHEA:41832"/>
        <dbReference type="Rhea" id="RHEA-COMP:9631"/>
        <dbReference type="Rhea" id="RHEA-COMP:9632"/>
        <dbReference type="ChEBI" id="CHEBI:15378"/>
        <dbReference type="ChEBI" id="CHEBI:57783"/>
        <dbReference type="ChEBI" id="CHEBI:58349"/>
        <dbReference type="ChEBI" id="CHEBI:78458"/>
        <dbReference type="ChEBI" id="CHEBI:78459"/>
    </reaction>
    <physiologicalReaction direction="left-to-right" evidence="2">
        <dbReference type="Rhea" id="RHEA:41833"/>
    </physiologicalReaction>
</comment>
<comment type="catalytic activity">
    <reaction evidence="2">
        <text>(2E)-octenoyl-[ACP] + NADPH + H(+) = octanoyl-[ACP] + NADP(+)</text>
        <dbReference type="Rhea" id="RHEA:41848"/>
        <dbReference type="Rhea" id="RHEA-COMP:9635"/>
        <dbReference type="Rhea" id="RHEA-COMP:9636"/>
        <dbReference type="ChEBI" id="CHEBI:15378"/>
        <dbReference type="ChEBI" id="CHEBI:57783"/>
        <dbReference type="ChEBI" id="CHEBI:58349"/>
        <dbReference type="ChEBI" id="CHEBI:78462"/>
        <dbReference type="ChEBI" id="CHEBI:78463"/>
    </reaction>
    <physiologicalReaction direction="left-to-right" evidence="2">
        <dbReference type="Rhea" id="RHEA:41849"/>
    </physiologicalReaction>
</comment>
<comment type="catalytic activity">
    <reaction evidence="2">
        <text>(2E)-decenoyl-[ACP] + NADPH + H(+) = decanoyl-[ACP] + NADP(+)</text>
        <dbReference type="Rhea" id="RHEA:41864"/>
        <dbReference type="Rhea" id="RHEA-COMP:9639"/>
        <dbReference type="Rhea" id="RHEA-COMP:9640"/>
        <dbReference type="ChEBI" id="CHEBI:15378"/>
        <dbReference type="ChEBI" id="CHEBI:57783"/>
        <dbReference type="ChEBI" id="CHEBI:58349"/>
        <dbReference type="ChEBI" id="CHEBI:78467"/>
        <dbReference type="ChEBI" id="CHEBI:78468"/>
    </reaction>
    <physiologicalReaction direction="left-to-right" evidence="2">
        <dbReference type="Rhea" id="RHEA:41865"/>
    </physiologicalReaction>
</comment>
<comment type="catalytic activity">
    <reaction evidence="2">
        <text>(2E)-dodecenoyl-[ACP] + NADPH + H(+) = dodecanoyl-[ACP] + NADP(+)</text>
        <dbReference type="Rhea" id="RHEA:41880"/>
        <dbReference type="Rhea" id="RHEA-COMP:9643"/>
        <dbReference type="Rhea" id="RHEA-COMP:9644"/>
        <dbReference type="ChEBI" id="CHEBI:15378"/>
        <dbReference type="ChEBI" id="CHEBI:57783"/>
        <dbReference type="ChEBI" id="CHEBI:58349"/>
        <dbReference type="ChEBI" id="CHEBI:65264"/>
        <dbReference type="ChEBI" id="CHEBI:78472"/>
    </reaction>
    <physiologicalReaction direction="left-to-right" evidence="2">
        <dbReference type="Rhea" id="RHEA:41881"/>
    </physiologicalReaction>
</comment>
<comment type="catalytic activity">
    <reaction evidence="2">
        <text>(2E)-tetradecenoyl-[ACP] + NADPH + H(+) = tetradecanoyl-[ACP] + NADP(+)</text>
        <dbReference type="Rhea" id="RHEA:41896"/>
        <dbReference type="Rhea" id="RHEA-COMP:9647"/>
        <dbReference type="Rhea" id="RHEA-COMP:9648"/>
        <dbReference type="ChEBI" id="CHEBI:15378"/>
        <dbReference type="ChEBI" id="CHEBI:57783"/>
        <dbReference type="ChEBI" id="CHEBI:58349"/>
        <dbReference type="ChEBI" id="CHEBI:78475"/>
        <dbReference type="ChEBI" id="CHEBI:78477"/>
    </reaction>
    <physiologicalReaction direction="left-to-right" evidence="2">
        <dbReference type="Rhea" id="RHEA:41897"/>
    </physiologicalReaction>
</comment>
<comment type="catalytic activity">
    <reaction evidence="2">
        <text>(2E)-hexadecenoyl-[ACP] + NADPH + H(+) = hexadecanoyl-[ACP] + NADP(+)</text>
        <dbReference type="Rhea" id="RHEA:41912"/>
        <dbReference type="Rhea" id="RHEA-COMP:9651"/>
        <dbReference type="Rhea" id="RHEA-COMP:9652"/>
        <dbReference type="ChEBI" id="CHEBI:15378"/>
        <dbReference type="ChEBI" id="CHEBI:57783"/>
        <dbReference type="ChEBI" id="CHEBI:58349"/>
        <dbReference type="ChEBI" id="CHEBI:78481"/>
        <dbReference type="ChEBI" id="CHEBI:78483"/>
    </reaction>
    <physiologicalReaction direction="left-to-right" evidence="2">
        <dbReference type="Rhea" id="RHEA:41913"/>
    </physiologicalReaction>
</comment>
<comment type="subunit">
    <text evidence="2">Homodimer.</text>
</comment>
<comment type="subcellular location">
    <subcellularLocation>
        <location evidence="2">Mitochondrion</location>
    </subcellularLocation>
</comment>
<comment type="tissue specificity">
    <text evidence="6">Expressed in Purkinje cells (at protein level).</text>
</comment>
<comment type="disruption phenotype">
    <text evidence="5">Homozygous deficiency causes placental insufficiency and embryonic lethality between 9.5 and 11.5 dpc.</text>
</comment>
<comment type="similarity">
    <text evidence="7">Belongs to the zinc-containing alcohol dehydrogenase family. Quinone oxidoreductase subfamily.</text>
</comment>
<sequence length="373" mass="40343">MLVSQRVTGARARAPQLAGLLEAWYRHGRTTSSYSALSEPSRVRALVYGNHGDPAKVVQLKNLELTAVEGSDVHVRMLAAPINPSDINMIQGNYGLLPKLPAVGGNEGVGQVIAVGSSVSALKPGDWVIPANAGLGTWRTEAVFSEEALIGIPKDIPLQSAATLGVNPCTAYRMLVDFEQLQPGDSVIQNASNSGVGQAVIQIASALRLKTINVVRDRPDIKKLTDRLKDLGADYVLTEEELRMPETKTIFKDLPLPRLALNCVGGKSSTELLRHLAPGGTMVTYGGMAKQPVTASVSLLIFKDLKLRGFWLSQWKKNHSPDEFKELILTLCNLIRQGRLTAPSCSEVPLQGYQQALEASMKPFVSSKQILTM</sequence>
<dbReference type="EC" id="1.3.1.104" evidence="2"/>
<dbReference type="EMBL" id="AK002533">
    <property type="protein sequence ID" value="BAB22169.1"/>
    <property type="molecule type" value="mRNA"/>
</dbReference>
<dbReference type="EMBL" id="BC003864">
    <property type="protein sequence ID" value="AAH03864.1"/>
    <property type="molecule type" value="mRNA"/>
</dbReference>
<dbReference type="CCDS" id="CCDS18715.1"/>
<dbReference type="RefSeq" id="NP_079573.2">
    <property type="nucleotide sequence ID" value="NM_025297.3"/>
</dbReference>
<dbReference type="SMR" id="Q9DCS3"/>
<dbReference type="BioGRID" id="205066">
    <property type="interactions" value="11"/>
</dbReference>
<dbReference type="FunCoup" id="Q9DCS3">
    <property type="interactions" value="4175"/>
</dbReference>
<dbReference type="STRING" id="10090.ENSMUSP00000030742"/>
<dbReference type="GlyGen" id="Q9DCS3">
    <property type="glycosylation" value="1 site, 1 O-linked glycan (1 site)"/>
</dbReference>
<dbReference type="iPTMnet" id="Q9DCS3"/>
<dbReference type="PhosphoSitePlus" id="Q9DCS3"/>
<dbReference type="SwissPalm" id="Q9DCS3"/>
<dbReference type="jPOST" id="Q9DCS3"/>
<dbReference type="PaxDb" id="10090-ENSMUSP00000030742"/>
<dbReference type="PeptideAtlas" id="Q9DCS3"/>
<dbReference type="ProteomicsDB" id="293449"/>
<dbReference type="Pumba" id="Q9DCS3"/>
<dbReference type="Antibodypedia" id="16646">
    <property type="antibodies" value="173 antibodies from 26 providers"/>
</dbReference>
<dbReference type="DNASU" id="26922"/>
<dbReference type="Ensembl" id="ENSMUST00000030742.11">
    <property type="protein sequence ID" value="ENSMUSP00000030742.5"/>
    <property type="gene ID" value="ENSMUSG00000028910.13"/>
</dbReference>
<dbReference type="GeneID" id="26922"/>
<dbReference type="KEGG" id="mmu:26922"/>
<dbReference type="UCSC" id="uc008vae.2">
    <property type="organism name" value="mouse"/>
</dbReference>
<dbReference type="AGR" id="MGI:1349441"/>
<dbReference type="CTD" id="51102"/>
<dbReference type="MGI" id="MGI:1349441">
    <property type="gene designation" value="Mecr"/>
</dbReference>
<dbReference type="VEuPathDB" id="HostDB:ENSMUSG00000028910"/>
<dbReference type="eggNOG" id="KOG0025">
    <property type="taxonomic scope" value="Eukaryota"/>
</dbReference>
<dbReference type="GeneTree" id="ENSGT00940000156592"/>
<dbReference type="HOGENOM" id="CLU_026673_17_1_1"/>
<dbReference type="InParanoid" id="Q9DCS3"/>
<dbReference type="OMA" id="YGYTQSK"/>
<dbReference type="OrthoDB" id="7482721at2759"/>
<dbReference type="PhylomeDB" id="Q9DCS3"/>
<dbReference type="TreeFam" id="TF312886"/>
<dbReference type="Reactome" id="R-MMU-77346">
    <property type="pathway name" value="Beta oxidation of decanoyl-CoA to octanoyl-CoA-CoA"/>
</dbReference>
<dbReference type="BioGRID-ORCS" id="26922">
    <property type="hits" value="28 hits in 76 CRISPR screens"/>
</dbReference>
<dbReference type="ChiTaRS" id="Mecr">
    <property type="organism name" value="mouse"/>
</dbReference>
<dbReference type="PRO" id="PR:Q9DCS3"/>
<dbReference type="Proteomes" id="UP000000589">
    <property type="component" value="Chromosome 4"/>
</dbReference>
<dbReference type="RNAct" id="Q9DCS3">
    <property type="molecule type" value="protein"/>
</dbReference>
<dbReference type="Bgee" id="ENSMUSG00000028910">
    <property type="expression patterns" value="Expressed in brown adipose tissue and 258 other cell types or tissues"/>
</dbReference>
<dbReference type="ExpressionAtlas" id="Q9DCS3">
    <property type="expression patterns" value="baseline and differential"/>
</dbReference>
<dbReference type="GO" id="GO:0005829">
    <property type="term" value="C:cytosol"/>
    <property type="evidence" value="ECO:0000266"/>
    <property type="project" value="MGI"/>
</dbReference>
<dbReference type="GO" id="GO:0016020">
    <property type="term" value="C:membrane"/>
    <property type="evidence" value="ECO:0007669"/>
    <property type="project" value="GOC"/>
</dbReference>
<dbReference type="GO" id="GO:0005739">
    <property type="term" value="C:mitochondrion"/>
    <property type="evidence" value="ECO:0007005"/>
    <property type="project" value="MGI"/>
</dbReference>
<dbReference type="GO" id="GO:0005634">
    <property type="term" value="C:nucleus"/>
    <property type="evidence" value="ECO:0000266"/>
    <property type="project" value="MGI"/>
</dbReference>
<dbReference type="GO" id="GO:0141148">
    <property type="term" value="F:enoyl-[acyl-carrier-protein] reductase (NADPH) activity"/>
    <property type="evidence" value="ECO:0007669"/>
    <property type="project" value="UniProtKB-EC"/>
</dbReference>
<dbReference type="GO" id="GO:0016922">
    <property type="term" value="F:nuclear receptor binding"/>
    <property type="evidence" value="ECO:0000266"/>
    <property type="project" value="MGI"/>
</dbReference>
<dbReference type="GO" id="GO:0046513">
    <property type="term" value="P:ceramide biosynthetic process"/>
    <property type="evidence" value="ECO:0000250"/>
    <property type="project" value="UniProtKB"/>
</dbReference>
<dbReference type="GO" id="GO:0006633">
    <property type="term" value="P:fatty acid biosynthetic process"/>
    <property type="evidence" value="ECO:0007669"/>
    <property type="project" value="UniProtKB-KW"/>
</dbReference>
<dbReference type="GO" id="GO:0006879">
    <property type="term" value="P:intracellular iron ion homeostasis"/>
    <property type="evidence" value="ECO:0000250"/>
    <property type="project" value="UniProtKB"/>
</dbReference>
<dbReference type="CDD" id="cd08290">
    <property type="entry name" value="ETR"/>
    <property type="match status" value="1"/>
</dbReference>
<dbReference type="FunFam" id="3.40.50.720:FF:000112">
    <property type="entry name" value="Enoyl-[acyl-carrier-protein] reductase 1, mitochondrial"/>
    <property type="match status" value="1"/>
</dbReference>
<dbReference type="FunFam" id="3.90.180.10:FF:000010">
    <property type="entry name" value="Enoyl-[acyl-carrier-protein] reductase, mitochondrial"/>
    <property type="match status" value="1"/>
</dbReference>
<dbReference type="Gene3D" id="3.90.180.10">
    <property type="entry name" value="Medium-chain alcohol dehydrogenases, catalytic domain"/>
    <property type="match status" value="1"/>
</dbReference>
<dbReference type="Gene3D" id="3.40.50.720">
    <property type="entry name" value="NAD(P)-binding Rossmann-like Domain"/>
    <property type="match status" value="1"/>
</dbReference>
<dbReference type="InterPro" id="IPR013149">
    <property type="entry name" value="ADH-like_C"/>
</dbReference>
<dbReference type="InterPro" id="IPR013154">
    <property type="entry name" value="ADH-like_N"/>
</dbReference>
<dbReference type="InterPro" id="IPR011032">
    <property type="entry name" value="GroES-like_sf"/>
</dbReference>
<dbReference type="InterPro" id="IPR051034">
    <property type="entry name" value="Mito_Enoyl-ACP_Reductase"/>
</dbReference>
<dbReference type="InterPro" id="IPR036291">
    <property type="entry name" value="NAD(P)-bd_dom_sf"/>
</dbReference>
<dbReference type="InterPro" id="IPR020843">
    <property type="entry name" value="PKS_ER"/>
</dbReference>
<dbReference type="PANTHER" id="PTHR43981">
    <property type="entry name" value="ENOYL-[ACYL-CARRIER-PROTEIN] REDUCTASE, MITOCHONDRIAL"/>
    <property type="match status" value="1"/>
</dbReference>
<dbReference type="PANTHER" id="PTHR43981:SF9">
    <property type="entry name" value="ENOYL-[ACYL-CARRIER-PROTEIN] REDUCTASE, MITOCHONDRIAL"/>
    <property type="match status" value="1"/>
</dbReference>
<dbReference type="Pfam" id="PF08240">
    <property type="entry name" value="ADH_N"/>
    <property type="match status" value="1"/>
</dbReference>
<dbReference type="Pfam" id="PF00107">
    <property type="entry name" value="ADH_zinc_N"/>
    <property type="match status" value="1"/>
</dbReference>
<dbReference type="SMART" id="SM00829">
    <property type="entry name" value="PKS_ER"/>
    <property type="match status" value="1"/>
</dbReference>
<dbReference type="SUPFAM" id="SSF50129">
    <property type="entry name" value="GroES-like"/>
    <property type="match status" value="1"/>
</dbReference>
<dbReference type="SUPFAM" id="SSF51735">
    <property type="entry name" value="NAD(P)-binding Rossmann-fold domains"/>
    <property type="match status" value="1"/>
</dbReference>
<organism>
    <name type="scientific">Mus musculus</name>
    <name type="common">Mouse</name>
    <dbReference type="NCBI Taxonomy" id="10090"/>
    <lineage>
        <taxon>Eukaryota</taxon>
        <taxon>Metazoa</taxon>
        <taxon>Chordata</taxon>
        <taxon>Craniata</taxon>
        <taxon>Vertebrata</taxon>
        <taxon>Euteleostomi</taxon>
        <taxon>Mammalia</taxon>
        <taxon>Eutheria</taxon>
        <taxon>Euarchontoglires</taxon>
        <taxon>Glires</taxon>
        <taxon>Rodentia</taxon>
        <taxon>Myomorpha</taxon>
        <taxon>Muroidea</taxon>
        <taxon>Muridae</taxon>
        <taxon>Murinae</taxon>
        <taxon>Mus</taxon>
        <taxon>Mus</taxon>
    </lineage>
</organism>
<proteinExistence type="evidence at protein level"/>
<protein>
    <recommendedName>
        <fullName>Enoyl-[acyl-carrier-protein] reductase, mitochondrial</fullName>
        <ecNumber evidence="2">1.3.1.104</ecNumber>
    </recommendedName>
    <alternativeName>
        <fullName>2-enoyl thioester reductase</fullName>
    </alternativeName>
    <alternativeName>
        <fullName>Nuclear receptor-binding factor 1</fullName>
        <shortName>NRBF-1</shortName>
    </alternativeName>
</protein>
<evidence type="ECO:0000250" key="1">
    <source>
        <dbReference type="UniProtKB" id="Q8WZM3"/>
    </source>
</evidence>
<evidence type="ECO:0000250" key="2">
    <source>
        <dbReference type="UniProtKB" id="Q9BV79"/>
    </source>
</evidence>
<evidence type="ECO:0000250" key="3">
    <source>
        <dbReference type="UniProtKB" id="Q9V6U9"/>
    </source>
</evidence>
<evidence type="ECO:0000255" key="4"/>
<evidence type="ECO:0000269" key="5">
    <source>
    </source>
</evidence>
<evidence type="ECO:0000269" key="6">
    <source>
    </source>
</evidence>
<evidence type="ECO:0000305" key="7"/>
<evidence type="ECO:0007744" key="8">
    <source>
    </source>
</evidence>
<evidence type="ECO:0007744" key="9">
    <source>
    </source>
</evidence>